<evidence type="ECO:0000255" key="1">
    <source>
        <dbReference type="HAMAP-Rule" id="MF_01716"/>
    </source>
</evidence>
<evidence type="ECO:0000256" key="2">
    <source>
        <dbReference type="SAM" id="MobiDB-lite"/>
    </source>
</evidence>
<proteinExistence type="inferred from homology"/>
<accession>Q3JSI8</accession>
<protein>
    <recommendedName>
        <fullName evidence="1">Ribose import ATP-binding protein RbsA 1</fullName>
        <ecNumber evidence="1">7.5.2.7</ecNumber>
    </recommendedName>
</protein>
<feature type="chain" id="PRO_0000261048" description="Ribose import ATP-binding protein RbsA 1">
    <location>
        <begin position="1"/>
        <end position="859"/>
    </location>
</feature>
<feature type="domain" description="ABC transporter 1" evidence="1">
    <location>
        <begin position="358"/>
        <end position="594"/>
    </location>
</feature>
<feature type="domain" description="ABC transporter 2" evidence="1">
    <location>
        <begin position="607"/>
        <end position="851"/>
    </location>
</feature>
<feature type="region of interest" description="Unknown">
    <location>
        <begin position="1"/>
        <end position="353"/>
    </location>
</feature>
<feature type="region of interest" description="Disordered" evidence="2">
    <location>
        <begin position="1"/>
        <end position="351"/>
    </location>
</feature>
<feature type="compositionally biased region" description="Basic and acidic residues" evidence="2">
    <location>
        <begin position="8"/>
        <end position="17"/>
    </location>
</feature>
<feature type="compositionally biased region" description="Basic residues" evidence="2">
    <location>
        <begin position="28"/>
        <end position="43"/>
    </location>
</feature>
<feature type="compositionally biased region" description="Basic and acidic residues" evidence="2">
    <location>
        <begin position="44"/>
        <end position="80"/>
    </location>
</feature>
<feature type="compositionally biased region" description="Basic and acidic residues" evidence="2">
    <location>
        <begin position="89"/>
        <end position="129"/>
    </location>
</feature>
<feature type="compositionally biased region" description="Basic and acidic residues" evidence="2">
    <location>
        <begin position="137"/>
        <end position="167"/>
    </location>
</feature>
<feature type="compositionally biased region" description="Basic residues" evidence="2">
    <location>
        <begin position="168"/>
        <end position="179"/>
    </location>
</feature>
<feature type="compositionally biased region" description="Basic and acidic residues" evidence="2">
    <location>
        <begin position="193"/>
        <end position="214"/>
    </location>
</feature>
<feature type="compositionally biased region" description="Basic and acidic residues" evidence="2">
    <location>
        <begin position="239"/>
        <end position="250"/>
    </location>
</feature>
<feature type="compositionally biased region" description="Basic and acidic residues" evidence="2">
    <location>
        <begin position="263"/>
        <end position="281"/>
    </location>
</feature>
<feature type="compositionally biased region" description="Basic and acidic residues" evidence="2">
    <location>
        <begin position="288"/>
        <end position="301"/>
    </location>
</feature>
<feature type="compositionally biased region" description="Basic and acidic residues" evidence="2">
    <location>
        <begin position="308"/>
        <end position="323"/>
    </location>
</feature>
<feature type="binding site" evidence="1">
    <location>
        <begin position="390"/>
        <end position="397"/>
    </location>
    <ligand>
        <name>ATP</name>
        <dbReference type="ChEBI" id="CHEBI:30616"/>
    </ligand>
</feature>
<reference key="1">
    <citation type="journal article" date="2010" name="Genome Biol. Evol.">
        <title>Continuing evolution of Burkholderia mallei through genome reduction and large-scale rearrangements.</title>
        <authorList>
            <person name="Losada L."/>
            <person name="Ronning C.M."/>
            <person name="DeShazer D."/>
            <person name="Woods D."/>
            <person name="Fedorova N."/>
            <person name="Kim H.S."/>
            <person name="Shabalina S.A."/>
            <person name="Pearson T.R."/>
            <person name="Brinkac L."/>
            <person name="Tan P."/>
            <person name="Nandi T."/>
            <person name="Crabtree J."/>
            <person name="Badger J."/>
            <person name="Beckstrom-Sternberg S."/>
            <person name="Saqib M."/>
            <person name="Schutzer S.E."/>
            <person name="Keim P."/>
            <person name="Nierman W.C."/>
        </authorList>
    </citation>
    <scope>NUCLEOTIDE SEQUENCE [LARGE SCALE GENOMIC DNA]</scope>
    <source>
        <strain>1710b</strain>
    </source>
</reference>
<gene>
    <name evidence="1" type="primary">rbsA1</name>
    <name type="ordered locus">BURPS1710b_2070</name>
</gene>
<name>RBSA1_BURP1</name>
<keyword id="KW-0067">ATP-binding</keyword>
<keyword id="KW-0997">Cell inner membrane</keyword>
<keyword id="KW-1003">Cell membrane</keyword>
<keyword id="KW-0472">Membrane</keyword>
<keyword id="KW-0547">Nucleotide-binding</keyword>
<keyword id="KW-0677">Repeat</keyword>
<keyword id="KW-0762">Sugar transport</keyword>
<keyword id="KW-1278">Translocase</keyword>
<keyword id="KW-0813">Transport</keyword>
<comment type="function">
    <text evidence="1">Part of the ABC transporter complex RbsABC involved in ribose import. Responsible for energy coupling to the transport system.</text>
</comment>
<comment type="catalytic activity">
    <reaction evidence="1">
        <text>D-ribose(out) + ATP + H2O = D-ribose(in) + ADP + phosphate + H(+)</text>
        <dbReference type="Rhea" id="RHEA:29903"/>
        <dbReference type="ChEBI" id="CHEBI:15377"/>
        <dbReference type="ChEBI" id="CHEBI:15378"/>
        <dbReference type="ChEBI" id="CHEBI:30616"/>
        <dbReference type="ChEBI" id="CHEBI:43474"/>
        <dbReference type="ChEBI" id="CHEBI:47013"/>
        <dbReference type="ChEBI" id="CHEBI:456216"/>
        <dbReference type="EC" id="7.5.2.7"/>
    </reaction>
</comment>
<comment type="subunit">
    <text evidence="1">The complex is composed of an ATP-binding protein (RbsA), two transmembrane proteins (RbsC) and a solute-binding protein (RbsB).</text>
</comment>
<comment type="subcellular location">
    <subcellularLocation>
        <location evidence="1">Cell inner membrane</location>
        <topology evidence="1">Peripheral membrane protein</topology>
    </subcellularLocation>
</comment>
<comment type="similarity">
    <text evidence="1">Belongs to the ABC transporter superfamily. Ribose importer (TC 3.A.1.2.1) family.</text>
</comment>
<dbReference type="EC" id="7.5.2.7" evidence="1"/>
<dbReference type="EMBL" id="CP000124">
    <property type="protein sequence ID" value="ABA47978.1"/>
    <property type="molecule type" value="Genomic_DNA"/>
</dbReference>
<dbReference type="SMR" id="Q3JSI8"/>
<dbReference type="EnsemblBacteria" id="ABA47978">
    <property type="protein sequence ID" value="ABA47978"/>
    <property type="gene ID" value="BURPS1710b_2070"/>
</dbReference>
<dbReference type="KEGG" id="bpm:BURPS1710b_2070"/>
<dbReference type="HOGENOM" id="CLU_000604_92_3_4"/>
<dbReference type="Proteomes" id="UP000002700">
    <property type="component" value="Chromosome I"/>
</dbReference>
<dbReference type="GO" id="GO:0005886">
    <property type="term" value="C:plasma membrane"/>
    <property type="evidence" value="ECO:0007669"/>
    <property type="project" value="UniProtKB-SubCell"/>
</dbReference>
<dbReference type="GO" id="GO:0015611">
    <property type="term" value="F:ABC-type D-ribose transporter activity"/>
    <property type="evidence" value="ECO:0007669"/>
    <property type="project" value="UniProtKB-EC"/>
</dbReference>
<dbReference type="GO" id="GO:0005524">
    <property type="term" value="F:ATP binding"/>
    <property type="evidence" value="ECO:0007669"/>
    <property type="project" value="UniProtKB-KW"/>
</dbReference>
<dbReference type="GO" id="GO:0016887">
    <property type="term" value="F:ATP hydrolysis activity"/>
    <property type="evidence" value="ECO:0007669"/>
    <property type="project" value="InterPro"/>
</dbReference>
<dbReference type="CDD" id="cd03216">
    <property type="entry name" value="ABC_Carb_Monos_I"/>
    <property type="match status" value="1"/>
</dbReference>
<dbReference type="CDD" id="cd03215">
    <property type="entry name" value="ABC_Carb_Monos_II"/>
    <property type="match status" value="1"/>
</dbReference>
<dbReference type="FunFam" id="3.40.50.300:FF:000127">
    <property type="entry name" value="Ribose import ATP-binding protein RbsA"/>
    <property type="match status" value="1"/>
</dbReference>
<dbReference type="Gene3D" id="3.40.50.300">
    <property type="entry name" value="P-loop containing nucleotide triphosphate hydrolases"/>
    <property type="match status" value="2"/>
</dbReference>
<dbReference type="InterPro" id="IPR003593">
    <property type="entry name" value="AAA+_ATPase"/>
</dbReference>
<dbReference type="InterPro" id="IPR050107">
    <property type="entry name" value="ABC_carbohydrate_import_ATPase"/>
</dbReference>
<dbReference type="InterPro" id="IPR003439">
    <property type="entry name" value="ABC_transporter-like_ATP-bd"/>
</dbReference>
<dbReference type="InterPro" id="IPR017871">
    <property type="entry name" value="ABC_transporter-like_CS"/>
</dbReference>
<dbReference type="InterPro" id="IPR027417">
    <property type="entry name" value="P-loop_NTPase"/>
</dbReference>
<dbReference type="PANTHER" id="PTHR43790">
    <property type="entry name" value="CARBOHYDRATE TRANSPORT ATP-BINDING PROTEIN MG119-RELATED"/>
    <property type="match status" value="1"/>
</dbReference>
<dbReference type="PANTHER" id="PTHR43790:SF3">
    <property type="entry name" value="D-ALLOSE IMPORT ATP-BINDING PROTEIN ALSA-RELATED"/>
    <property type="match status" value="1"/>
</dbReference>
<dbReference type="Pfam" id="PF00005">
    <property type="entry name" value="ABC_tran"/>
    <property type="match status" value="2"/>
</dbReference>
<dbReference type="SMART" id="SM00382">
    <property type="entry name" value="AAA"/>
    <property type="match status" value="2"/>
</dbReference>
<dbReference type="SUPFAM" id="SSF52540">
    <property type="entry name" value="P-loop containing nucleoside triphosphate hydrolases"/>
    <property type="match status" value="2"/>
</dbReference>
<dbReference type="PROSITE" id="PS00211">
    <property type="entry name" value="ABC_TRANSPORTER_1"/>
    <property type="match status" value="1"/>
</dbReference>
<dbReference type="PROSITE" id="PS50893">
    <property type="entry name" value="ABC_TRANSPORTER_2"/>
    <property type="match status" value="2"/>
</dbReference>
<dbReference type="PROSITE" id="PS51254">
    <property type="entry name" value="RBSA"/>
    <property type="match status" value="1"/>
</dbReference>
<sequence length="859" mass="96153">MRASLENGDDHDAHRLVDAGFRPPGRPRAARRRAFARARRGERRARGTAEDRHDVPGAEQPVLRDDAKGARRGGRVDRRAGDRHRRASRREQAGERRRGHAAEEDRHPAREPDRFDGHPVGRRVGEEGGRRRRRGGRERERPGRRVRRLEEFRRGRDVVRLPREGDRRRRRSRDPRRHPGRADSRARARLPRGAREIPEREDRRRAERQAGARERARRHREHDPGAPVAQGRLQRQRRRLDGRAVRDRGVGPRHQAHERRRRAGGDRGDAEAELEVHRDVRAVPARPDSPRDRHRAREEVGRQCAEGDSGRREADRQGQREDVQLVSGPRDEADDMDEASGAARAPDEASEEAMDTILALTGITKRFPGVVALRGIDLRVARGEIHALLGENGAGKSTLMKILCGIHPPDEGVIALDGEPRRFANHHDAIAAGVGIVFQEFSLIPELNAVDNLFLGREWRGRLGLRERARMRRAAADIFARLDVAIDLSAPVRELSVAQQQFVEIGKALSLDARLLILDEPTATLTPAEAAHLFGVMRELKRRGVAMIFISHHLDEIFEVCDRITVLRDGQYVGTTEVARTDVGALVEMMVGRRIEQSFPPKPRLARDAAPVLEVDALQVRENGPVNRFALREGEILGFAGLVGSGRTSSALALIGAKPARVRRMRVRGRPVCLADPAAALAAGIGLLPESRKTQGLIPAFSIRHNIAINNLGKHRRLRWFVDAAAETRTTLELMQRLGVKAPTPHTRVDTLSGGNQQKVVIARWLNHHTRILIFDEPTRGIDIGAKAEIYQLMRELSARGYSIVLISSELPEIVGLCDRVAVFRQGRIEAMLEGEAIEPNTVMTYATSDVRGANHEHA</sequence>
<organism>
    <name type="scientific">Burkholderia pseudomallei (strain 1710b)</name>
    <dbReference type="NCBI Taxonomy" id="320372"/>
    <lineage>
        <taxon>Bacteria</taxon>
        <taxon>Pseudomonadati</taxon>
        <taxon>Pseudomonadota</taxon>
        <taxon>Betaproteobacteria</taxon>
        <taxon>Burkholderiales</taxon>
        <taxon>Burkholderiaceae</taxon>
        <taxon>Burkholderia</taxon>
        <taxon>pseudomallei group</taxon>
    </lineage>
</organism>